<reference key="1">
    <citation type="journal article" date="2002" name="Nucleic Acids Res.">
        <title>Genome sequence of Oceanobacillus iheyensis isolated from the Iheya Ridge and its unexpected adaptive capabilities to extreme environments.</title>
        <authorList>
            <person name="Takami H."/>
            <person name="Takaki Y."/>
            <person name="Uchiyama I."/>
        </authorList>
    </citation>
    <scope>NUCLEOTIDE SEQUENCE [LARGE SCALE GENOMIC DNA]</scope>
    <source>
        <strain>DSM 14371 / CIP 107618 / JCM 11309 / KCTC 3954 / HTE831</strain>
    </source>
</reference>
<accession>Q8EM79</accession>
<organism>
    <name type="scientific">Oceanobacillus iheyensis (strain DSM 14371 / CIP 107618 / JCM 11309 / KCTC 3954 / HTE831)</name>
    <dbReference type="NCBI Taxonomy" id="221109"/>
    <lineage>
        <taxon>Bacteria</taxon>
        <taxon>Bacillati</taxon>
        <taxon>Bacillota</taxon>
        <taxon>Bacilli</taxon>
        <taxon>Bacillales</taxon>
        <taxon>Bacillaceae</taxon>
        <taxon>Oceanobacillus</taxon>
    </lineage>
</organism>
<protein>
    <recommendedName>
        <fullName evidence="1">ATP synthase subunit b</fullName>
    </recommendedName>
    <alternativeName>
        <fullName evidence="1">ATP synthase F(0) sector subunit b</fullName>
    </alternativeName>
    <alternativeName>
        <fullName evidence="1">ATPase subunit I</fullName>
    </alternativeName>
    <alternativeName>
        <fullName evidence="1">F-type ATPase subunit b</fullName>
        <shortName evidence="1">F-ATPase subunit b</shortName>
    </alternativeName>
</protein>
<comment type="function">
    <text evidence="1">F(1)F(0) ATP synthase produces ATP from ADP in the presence of a proton or sodium gradient. F-type ATPases consist of two structural domains, F(1) containing the extramembraneous catalytic core and F(0) containing the membrane proton channel, linked together by a central stalk and a peripheral stalk. During catalysis, ATP synthesis in the catalytic domain of F(1) is coupled via a rotary mechanism of the central stalk subunits to proton translocation.</text>
</comment>
<comment type="function">
    <text evidence="1">Component of the F(0) channel, it forms part of the peripheral stalk, linking F(1) to F(0).</text>
</comment>
<comment type="subunit">
    <text evidence="1">F-type ATPases have 2 components, F(1) - the catalytic core - and F(0) - the membrane proton channel. F(1) has five subunits: alpha(3), beta(3), gamma(1), delta(1), epsilon(1). F(0) has three main subunits: a(1), b(2) and c(10-14). The alpha and beta chains form an alternating ring which encloses part of the gamma chain. F(1) is attached to F(0) by a central stalk formed by the gamma and epsilon chains, while a peripheral stalk is formed by the delta and b chains.</text>
</comment>
<comment type="subcellular location">
    <subcellularLocation>
        <location evidence="1">Cell membrane</location>
        <topology evidence="1">Single-pass membrane protein</topology>
    </subcellularLocation>
</comment>
<comment type="similarity">
    <text evidence="1">Belongs to the ATPase B chain family.</text>
</comment>
<dbReference type="EMBL" id="BA000028">
    <property type="protein sequence ID" value="BAC14935.1"/>
    <property type="molecule type" value="Genomic_DNA"/>
</dbReference>
<dbReference type="RefSeq" id="WP_011067376.1">
    <property type="nucleotide sequence ID" value="NC_004193.1"/>
</dbReference>
<dbReference type="SMR" id="Q8EM79"/>
<dbReference type="STRING" id="221109.gene:10735231"/>
<dbReference type="KEGG" id="oih:OB2979"/>
<dbReference type="eggNOG" id="COG0711">
    <property type="taxonomic scope" value="Bacteria"/>
</dbReference>
<dbReference type="HOGENOM" id="CLU_079215_4_2_9"/>
<dbReference type="OrthoDB" id="282095at2"/>
<dbReference type="PhylomeDB" id="Q8EM79"/>
<dbReference type="Proteomes" id="UP000000822">
    <property type="component" value="Chromosome"/>
</dbReference>
<dbReference type="GO" id="GO:0005886">
    <property type="term" value="C:plasma membrane"/>
    <property type="evidence" value="ECO:0007669"/>
    <property type="project" value="UniProtKB-SubCell"/>
</dbReference>
<dbReference type="GO" id="GO:0045259">
    <property type="term" value="C:proton-transporting ATP synthase complex"/>
    <property type="evidence" value="ECO:0007669"/>
    <property type="project" value="UniProtKB-KW"/>
</dbReference>
<dbReference type="GO" id="GO:0046933">
    <property type="term" value="F:proton-transporting ATP synthase activity, rotational mechanism"/>
    <property type="evidence" value="ECO:0007669"/>
    <property type="project" value="UniProtKB-UniRule"/>
</dbReference>
<dbReference type="GO" id="GO:0046961">
    <property type="term" value="F:proton-transporting ATPase activity, rotational mechanism"/>
    <property type="evidence" value="ECO:0007669"/>
    <property type="project" value="TreeGrafter"/>
</dbReference>
<dbReference type="CDD" id="cd06503">
    <property type="entry name" value="ATP-synt_Fo_b"/>
    <property type="match status" value="1"/>
</dbReference>
<dbReference type="Gene3D" id="6.10.250.1580">
    <property type="match status" value="1"/>
</dbReference>
<dbReference type="HAMAP" id="MF_01398">
    <property type="entry name" value="ATP_synth_b_bprime"/>
    <property type="match status" value="1"/>
</dbReference>
<dbReference type="InterPro" id="IPR028987">
    <property type="entry name" value="ATP_synth_B-like_membr_sf"/>
</dbReference>
<dbReference type="InterPro" id="IPR002146">
    <property type="entry name" value="ATP_synth_b/b'su_bac/chlpt"/>
</dbReference>
<dbReference type="InterPro" id="IPR005864">
    <property type="entry name" value="ATP_synth_F0_bsu_bac"/>
</dbReference>
<dbReference type="InterPro" id="IPR050059">
    <property type="entry name" value="ATP_synthase_B_chain"/>
</dbReference>
<dbReference type="NCBIfam" id="TIGR01144">
    <property type="entry name" value="ATP_synt_b"/>
    <property type="match status" value="1"/>
</dbReference>
<dbReference type="PANTHER" id="PTHR33445:SF1">
    <property type="entry name" value="ATP SYNTHASE SUBUNIT B"/>
    <property type="match status" value="1"/>
</dbReference>
<dbReference type="PANTHER" id="PTHR33445">
    <property type="entry name" value="ATP SYNTHASE SUBUNIT B', CHLOROPLASTIC"/>
    <property type="match status" value="1"/>
</dbReference>
<dbReference type="Pfam" id="PF00430">
    <property type="entry name" value="ATP-synt_B"/>
    <property type="match status" value="1"/>
</dbReference>
<dbReference type="SUPFAM" id="SSF81573">
    <property type="entry name" value="F1F0 ATP synthase subunit B, membrane domain"/>
    <property type="match status" value="1"/>
</dbReference>
<keyword id="KW-0066">ATP synthesis</keyword>
<keyword id="KW-1003">Cell membrane</keyword>
<keyword id="KW-0138">CF(0)</keyword>
<keyword id="KW-0375">Hydrogen ion transport</keyword>
<keyword id="KW-0406">Ion transport</keyword>
<keyword id="KW-0472">Membrane</keyword>
<keyword id="KW-1185">Reference proteome</keyword>
<keyword id="KW-0812">Transmembrane</keyword>
<keyword id="KW-1133">Transmembrane helix</keyword>
<keyword id="KW-0813">Transport</keyword>
<evidence type="ECO:0000255" key="1">
    <source>
        <dbReference type="HAMAP-Rule" id="MF_01398"/>
    </source>
</evidence>
<gene>
    <name evidence="1" type="primary">atpF</name>
    <name type="ordered locus">OB2979</name>
</gene>
<name>ATPF_OCEIH</name>
<feature type="chain" id="PRO_0000368636" description="ATP synthase subunit b">
    <location>
        <begin position="1"/>
        <end position="175"/>
    </location>
</feature>
<feature type="transmembrane region" description="Helical" evidence="1">
    <location>
        <begin position="22"/>
        <end position="44"/>
    </location>
</feature>
<proteinExistence type="inferred from homology"/>
<sequence length="175" mass="19649">MHSYIDLLNIGASVGGLRWPDMLVQLFFFLILLALLKKFAWGPLMSKMEERENYVANEIESAEQSRAEAEKASKDAAEQLNQVKAEAQKMIEDAKAAGAKQEQAIIDSAREEADRIKEAAQADIQNEKERAIQALQDKVASLSVLIASKVIEKELSEQDQEKLINEYIQEVGEDR</sequence>